<name>CH10_BUCMP</name>
<evidence type="ECO:0000255" key="1">
    <source>
        <dbReference type="HAMAP-Rule" id="MF_00580"/>
    </source>
</evidence>
<evidence type="ECO:0000305" key="2"/>
<protein>
    <recommendedName>
        <fullName evidence="1">Co-chaperonin GroES</fullName>
    </recommendedName>
    <alternativeName>
        <fullName evidence="1">10 kDa chaperonin</fullName>
    </alternativeName>
    <alternativeName>
        <fullName evidence="1">Chaperonin-10</fullName>
        <shortName evidence="1">Cpn10</shortName>
    </alternativeName>
</protein>
<reference key="1">
    <citation type="journal article" date="1998" name="J. Virol.">
        <title>Potato leafroll virus binds to the equatorial domain of the aphid endosymbiotic GroEL homolog.</title>
        <authorList>
            <person name="Hogenhout S.A."/>
            <person name="van der Wilk F."/>
            <person name="Verbeek M."/>
            <person name="Goldbach R.W."/>
            <person name="van den Heuvel J.F.J.M."/>
        </authorList>
    </citation>
    <scope>NUCLEOTIDE SEQUENCE [GENOMIC DNA]</scope>
</reference>
<keyword id="KW-0143">Chaperone</keyword>
<keyword id="KW-0963">Cytoplasm</keyword>
<dbReference type="EMBL" id="AF003957">
    <property type="protein sequence ID" value="AAC04236.1"/>
    <property type="molecule type" value="Genomic_DNA"/>
</dbReference>
<dbReference type="SMR" id="O51831"/>
<dbReference type="GO" id="GO:0005737">
    <property type="term" value="C:cytoplasm"/>
    <property type="evidence" value="ECO:0007669"/>
    <property type="project" value="UniProtKB-SubCell"/>
</dbReference>
<dbReference type="GO" id="GO:0005524">
    <property type="term" value="F:ATP binding"/>
    <property type="evidence" value="ECO:0007669"/>
    <property type="project" value="InterPro"/>
</dbReference>
<dbReference type="GO" id="GO:0046872">
    <property type="term" value="F:metal ion binding"/>
    <property type="evidence" value="ECO:0007669"/>
    <property type="project" value="TreeGrafter"/>
</dbReference>
<dbReference type="GO" id="GO:0044183">
    <property type="term" value="F:protein folding chaperone"/>
    <property type="evidence" value="ECO:0007669"/>
    <property type="project" value="InterPro"/>
</dbReference>
<dbReference type="GO" id="GO:0051087">
    <property type="term" value="F:protein-folding chaperone binding"/>
    <property type="evidence" value="ECO:0007669"/>
    <property type="project" value="TreeGrafter"/>
</dbReference>
<dbReference type="GO" id="GO:0051082">
    <property type="term" value="F:unfolded protein binding"/>
    <property type="evidence" value="ECO:0007669"/>
    <property type="project" value="TreeGrafter"/>
</dbReference>
<dbReference type="GO" id="GO:0051085">
    <property type="term" value="P:chaperone cofactor-dependent protein refolding"/>
    <property type="evidence" value="ECO:0007669"/>
    <property type="project" value="TreeGrafter"/>
</dbReference>
<dbReference type="CDD" id="cd00320">
    <property type="entry name" value="cpn10"/>
    <property type="match status" value="1"/>
</dbReference>
<dbReference type="FunFam" id="2.30.33.40:FF:000001">
    <property type="entry name" value="10 kDa chaperonin"/>
    <property type="match status" value="1"/>
</dbReference>
<dbReference type="Gene3D" id="2.30.33.40">
    <property type="entry name" value="GroES chaperonin"/>
    <property type="match status" value="1"/>
</dbReference>
<dbReference type="HAMAP" id="MF_00580">
    <property type="entry name" value="CH10"/>
    <property type="match status" value="1"/>
</dbReference>
<dbReference type="InterPro" id="IPR020818">
    <property type="entry name" value="Chaperonin_GroES"/>
</dbReference>
<dbReference type="InterPro" id="IPR037124">
    <property type="entry name" value="Chaperonin_GroES_sf"/>
</dbReference>
<dbReference type="InterPro" id="IPR018369">
    <property type="entry name" value="Chaprnonin_Cpn10_CS"/>
</dbReference>
<dbReference type="InterPro" id="IPR011032">
    <property type="entry name" value="GroES-like_sf"/>
</dbReference>
<dbReference type="NCBIfam" id="NF001526">
    <property type="entry name" value="PRK00364.1-1"/>
    <property type="match status" value="1"/>
</dbReference>
<dbReference type="PANTHER" id="PTHR10772">
    <property type="entry name" value="10 KDA HEAT SHOCK PROTEIN"/>
    <property type="match status" value="1"/>
</dbReference>
<dbReference type="PANTHER" id="PTHR10772:SF58">
    <property type="entry name" value="CO-CHAPERONIN GROES"/>
    <property type="match status" value="1"/>
</dbReference>
<dbReference type="Pfam" id="PF00166">
    <property type="entry name" value="Cpn10"/>
    <property type="match status" value="1"/>
</dbReference>
<dbReference type="PRINTS" id="PR00297">
    <property type="entry name" value="CHAPERONIN10"/>
</dbReference>
<dbReference type="SMART" id="SM00883">
    <property type="entry name" value="Cpn10"/>
    <property type="match status" value="1"/>
</dbReference>
<dbReference type="SUPFAM" id="SSF50129">
    <property type="entry name" value="GroES-like"/>
    <property type="match status" value="1"/>
</dbReference>
<dbReference type="PROSITE" id="PS00681">
    <property type="entry name" value="CHAPERONINS_CPN10"/>
    <property type="match status" value="1"/>
</dbReference>
<sequence>MKIRPLHDRVLVKRQEVESKSAGGIVLTGSAAGKSTRGTVTAIGKGRVLDNGQIKPLDVKVGDTVIFNEGYGAKTEKINTEELLLLTESDILAIVE</sequence>
<proteinExistence type="inferred from homology"/>
<comment type="function">
    <text evidence="1">Together with the chaperonin GroEL, plays an essential role in assisting protein folding. The GroEL-GroES system forms a nano-cage that allows encapsulation of the non-native substrate proteins and provides a physical environment optimized to promote and accelerate protein folding. GroES binds to the apical surface of the GroEL ring, thereby capping the opening of the GroEL channel.</text>
</comment>
<comment type="subunit">
    <text evidence="1">Heptamer of 7 subunits arranged in a ring. Interacts with the chaperonin GroEL.</text>
</comment>
<comment type="subcellular location">
    <subcellularLocation>
        <location evidence="1">Cytoplasm</location>
    </subcellularLocation>
</comment>
<comment type="similarity">
    <text evidence="1 2">Belongs to the GroES chaperonin family.</text>
</comment>
<gene>
    <name evidence="1" type="primary">groES</name>
    <name evidence="1" type="synonym">groS</name>
    <name type="synonym">mopB</name>
    <name type="synonym">symS</name>
</gene>
<accession>O51831</accession>
<feature type="chain" id="PRO_0000174716" description="Co-chaperonin GroES">
    <location>
        <begin position="1"/>
        <end position="96"/>
    </location>
</feature>
<organism>
    <name type="scientific">Buchnera aphidicola subsp. Myzus persicae</name>
    <name type="common">Myzus persicae primary endosymbiont</name>
    <dbReference type="NCBI Taxonomy" id="98795"/>
    <lineage>
        <taxon>Bacteria</taxon>
        <taxon>Pseudomonadati</taxon>
        <taxon>Pseudomonadota</taxon>
        <taxon>Gammaproteobacteria</taxon>
        <taxon>Enterobacterales</taxon>
        <taxon>Erwiniaceae</taxon>
        <taxon>Buchnera</taxon>
    </lineage>
</organism>